<name>ARSC2_CORGK</name>
<gene>
    <name type="primary">arsC2</name>
    <name type="synonym">arsX</name>
    <name type="ordered locus">WA5_0259</name>
</gene>
<reference key="1">
    <citation type="journal article" date="2012" name="Genome Biol.">
        <title>A high-throughput approach to identify genomic variants of bacterial metabolite producers at the single-cell level.</title>
        <authorList>
            <person name="Binder S."/>
            <person name="Schendzielorz G."/>
            <person name="Stabler N."/>
            <person name="Krumbach K."/>
            <person name="Hoffmann K."/>
            <person name="Bott M."/>
            <person name="Eggeling L."/>
        </authorList>
    </citation>
    <scope>NUCLEOTIDE SEQUENCE [LARGE SCALE GENOMIC DNA]</scope>
    <source>
        <strain>ATCC 13032 / K051</strain>
    </source>
</reference>
<proteinExistence type="inferred from homology"/>
<organism>
    <name type="scientific">Corynebacterium glutamicum (strain ATCC 13032 / K051)</name>
    <dbReference type="NCBI Taxonomy" id="1204414"/>
    <lineage>
        <taxon>Bacteria</taxon>
        <taxon>Bacillati</taxon>
        <taxon>Actinomycetota</taxon>
        <taxon>Actinomycetes</taxon>
        <taxon>Mycobacteriales</taxon>
        <taxon>Corynebacteriaceae</taxon>
        <taxon>Corynebacterium</taxon>
    </lineage>
</organism>
<evidence type="ECO:0000250" key="1"/>
<evidence type="ECO:0000305" key="2"/>
<accession>P0DKS8</accession>
<accession>Q6M898</accession>
<accession>Q8NTP3</accession>
<dbReference type="EC" id="2.8.4.2"/>
<dbReference type="EMBL" id="HE802067">
    <property type="protein sequence ID" value="CCH23480.1"/>
    <property type="molecule type" value="Genomic_DNA"/>
</dbReference>
<dbReference type="RefSeq" id="WP_003863342.1">
    <property type="nucleotide sequence ID" value="NC_020519.1"/>
</dbReference>
<dbReference type="SMR" id="P0DKS8"/>
<dbReference type="KEGG" id="cgu:WA5_0259"/>
<dbReference type="PATRIC" id="fig|1204414.5.peg.281"/>
<dbReference type="HOGENOM" id="CLU_071415_3_3_11"/>
<dbReference type="GO" id="GO:0005737">
    <property type="term" value="C:cytoplasm"/>
    <property type="evidence" value="ECO:0007669"/>
    <property type="project" value="UniProtKB-SubCell"/>
</dbReference>
<dbReference type="GO" id="GO:0102100">
    <property type="term" value="F:mycothiol-arsenate ligase activity"/>
    <property type="evidence" value="ECO:0007669"/>
    <property type="project" value="UniProtKB-EC"/>
</dbReference>
<dbReference type="GO" id="GO:0046685">
    <property type="term" value="P:response to arsenic-containing substance"/>
    <property type="evidence" value="ECO:0007669"/>
    <property type="project" value="UniProtKB-KW"/>
</dbReference>
<dbReference type="Gene3D" id="3.40.50.2300">
    <property type="match status" value="1"/>
</dbReference>
<dbReference type="InterPro" id="IPR023485">
    <property type="entry name" value="Ptyr_pPase"/>
</dbReference>
<dbReference type="InterPro" id="IPR036196">
    <property type="entry name" value="Ptyr_pPase_sf"/>
</dbReference>
<dbReference type="PANTHER" id="PTHR43428">
    <property type="entry name" value="ARSENATE REDUCTASE"/>
    <property type="match status" value="1"/>
</dbReference>
<dbReference type="PANTHER" id="PTHR43428:SF1">
    <property type="entry name" value="ARSENATE REDUCTASE"/>
    <property type="match status" value="1"/>
</dbReference>
<dbReference type="Pfam" id="PF01451">
    <property type="entry name" value="LMWPc"/>
    <property type="match status" value="1"/>
</dbReference>
<dbReference type="SMART" id="SM00226">
    <property type="entry name" value="LMWPc"/>
    <property type="match status" value="1"/>
</dbReference>
<dbReference type="SUPFAM" id="SSF52788">
    <property type="entry name" value="Phosphotyrosine protein phosphatases I"/>
    <property type="match status" value="1"/>
</dbReference>
<feature type="chain" id="PRO_0000420636" description="Arsenate-mycothiol transferase ArsC2">
    <location>
        <begin position="1"/>
        <end position="129"/>
    </location>
</feature>
<keyword id="KW-0059">Arsenical resistance</keyword>
<keyword id="KW-0963">Cytoplasm</keyword>
<keyword id="KW-0808">Transferase</keyword>
<protein>
    <recommendedName>
        <fullName>Arsenate-mycothiol transferase ArsC2</fullName>
        <ecNumber>2.8.4.2</ecNumber>
    </recommendedName>
    <alternativeName>
        <fullName>Mycothiol-dependent arsenate reductase ArsC2</fullName>
    </alternativeName>
</protein>
<sequence>MKSVLFVCVGNGGKSQMAAALAQKYASDSVEIHSAGTKPAQGLNQLSVESIAEVGADMSQGIPKAIDPELLRTVDRVVILGDDAQVDMPESAQGALERWSIEEPDAQGMERMRIVRDQIDNRVQALLAG</sequence>
<comment type="function">
    <text evidence="1">Involved in defense against toxic arsenate. Involved in the mycothiol/myoredoxin redox pathway which uses a mycothioltransferase mechanism; facilitates adduct formation between arsenate and mycothiol (By similarity).</text>
</comment>
<comment type="catalytic activity">
    <reaction>
        <text>mycothiol + arsenate = arseno-mycothiol + H2O</text>
        <dbReference type="Rhea" id="RHEA:27349"/>
        <dbReference type="ChEBI" id="CHEBI:15377"/>
        <dbReference type="ChEBI" id="CHEBI:16768"/>
        <dbReference type="ChEBI" id="CHEBI:48597"/>
        <dbReference type="ChEBI" id="CHEBI:59655"/>
        <dbReference type="EC" id="2.8.4.2"/>
    </reaction>
</comment>
<comment type="subcellular location">
    <subcellularLocation>
        <location evidence="1">Cytoplasm</location>
    </subcellularLocation>
</comment>
<comment type="similarity">
    <text evidence="2">Belongs to the low molecular weight phosphotyrosine protein phosphatase family.</text>
</comment>